<keyword id="KW-0004">4Fe-4S</keyword>
<keyword id="KW-0013">ADP-ribosylation</keyword>
<keyword id="KW-0067">ATP-binding</keyword>
<keyword id="KW-0408">Iron</keyword>
<keyword id="KW-0411">Iron-sulfur</keyword>
<keyword id="KW-0479">Metal-binding</keyword>
<keyword id="KW-0535">Nitrogen fixation</keyword>
<keyword id="KW-0547">Nucleotide-binding</keyword>
<keyword id="KW-0560">Oxidoreductase</keyword>
<keyword id="KW-1185">Reference proteome</keyword>
<proteinExistence type="inferred from homology"/>
<comment type="function">
    <text evidence="1">The key enzymatic reactions in nitrogen fixation are catalyzed by the nitrogenase complex, which has 2 components: the iron protein and the molybdenum-iron protein.</text>
</comment>
<comment type="catalytic activity">
    <reaction evidence="1">
        <text>N2 + 8 reduced [2Fe-2S]-[ferredoxin] + 16 ATP + 16 H2O = H2 + 8 oxidized [2Fe-2S]-[ferredoxin] + 2 NH4(+) + 16 ADP + 16 phosphate + 6 H(+)</text>
        <dbReference type="Rhea" id="RHEA:21448"/>
        <dbReference type="Rhea" id="RHEA-COMP:10000"/>
        <dbReference type="Rhea" id="RHEA-COMP:10001"/>
        <dbReference type="ChEBI" id="CHEBI:15377"/>
        <dbReference type="ChEBI" id="CHEBI:15378"/>
        <dbReference type="ChEBI" id="CHEBI:17997"/>
        <dbReference type="ChEBI" id="CHEBI:18276"/>
        <dbReference type="ChEBI" id="CHEBI:28938"/>
        <dbReference type="ChEBI" id="CHEBI:30616"/>
        <dbReference type="ChEBI" id="CHEBI:33737"/>
        <dbReference type="ChEBI" id="CHEBI:33738"/>
        <dbReference type="ChEBI" id="CHEBI:43474"/>
        <dbReference type="ChEBI" id="CHEBI:456216"/>
        <dbReference type="EC" id="1.18.6.1"/>
    </reaction>
</comment>
<comment type="cofactor">
    <cofactor evidence="1">
        <name>[4Fe-4S] cluster</name>
        <dbReference type="ChEBI" id="CHEBI:49883"/>
    </cofactor>
    <text evidence="1">Binds 1 [4Fe-4S] cluster per dimer.</text>
</comment>
<comment type="subunit">
    <text evidence="1">Homodimer.</text>
</comment>
<comment type="PTM">
    <text evidence="1">The reversible ADP-ribosylation of Arg-97 inactivates the nitrogenase reductase and regulates nitrogenase activity.</text>
</comment>
<comment type="similarity">
    <text evidence="1">Belongs to the NifH/BchL/ChlL family.</text>
</comment>
<reference key="1">
    <citation type="journal article" date="2006" name="Science">
        <title>Genome of rice cluster I archaea -- the key methane producers in the rice rhizosphere.</title>
        <authorList>
            <person name="Erkel C."/>
            <person name="Kube M."/>
            <person name="Reinhardt R."/>
            <person name="Liesack W."/>
        </authorList>
    </citation>
    <scope>NUCLEOTIDE SEQUENCE [LARGE SCALE GENOMIC DNA]</scope>
    <source>
        <strain>DSM 22066 / NBRC 105507 / MRE50</strain>
    </source>
</reference>
<name>NIFH_METAR</name>
<organism>
    <name type="scientific">Methanocella arvoryzae (strain DSM 22066 / NBRC 105507 / MRE50)</name>
    <dbReference type="NCBI Taxonomy" id="351160"/>
    <lineage>
        <taxon>Archaea</taxon>
        <taxon>Methanobacteriati</taxon>
        <taxon>Methanobacteriota</taxon>
        <taxon>Stenosarchaea group</taxon>
        <taxon>Methanomicrobia</taxon>
        <taxon>Methanocellales</taxon>
        <taxon>Methanocellaceae</taxon>
        <taxon>Methanocella</taxon>
    </lineage>
</organism>
<gene>
    <name evidence="1" type="primary">nifH</name>
    <name type="ordered locus">UNCMA_13850</name>
    <name type="ORF">RCIX1606</name>
</gene>
<accession>Q0W443</accession>
<evidence type="ECO:0000255" key="1">
    <source>
        <dbReference type="HAMAP-Rule" id="MF_00533"/>
    </source>
</evidence>
<protein>
    <recommendedName>
        <fullName evidence="1">Nitrogenase iron protein</fullName>
        <ecNumber evidence="1">1.18.6.1</ecNumber>
    </recommendedName>
    <alternativeName>
        <fullName evidence="1">Nitrogenase Fe protein</fullName>
    </alternativeName>
    <alternativeName>
        <fullName evidence="1">Nitrogenase component II</fullName>
    </alternativeName>
    <alternativeName>
        <fullName evidence="1">Nitrogenase reductase</fullName>
    </alternativeName>
</protein>
<dbReference type="EC" id="1.18.6.1" evidence="1"/>
<dbReference type="EMBL" id="AM114193">
    <property type="protein sequence ID" value="CAJ36850.1"/>
    <property type="molecule type" value="Genomic_DNA"/>
</dbReference>
<dbReference type="RefSeq" id="WP_012035713.1">
    <property type="nucleotide sequence ID" value="NC_009464.1"/>
</dbReference>
<dbReference type="SMR" id="Q0W443"/>
<dbReference type="STRING" id="351160.RCIX1606"/>
<dbReference type="GeneID" id="5144036"/>
<dbReference type="KEGG" id="rci:RCIX1606"/>
<dbReference type="PATRIC" id="fig|351160.9.peg.1430"/>
<dbReference type="eggNOG" id="arCOG00590">
    <property type="taxonomic scope" value="Archaea"/>
</dbReference>
<dbReference type="OrthoDB" id="145464at2157"/>
<dbReference type="Proteomes" id="UP000000663">
    <property type="component" value="Chromosome"/>
</dbReference>
<dbReference type="GO" id="GO:0051539">
    <property type="term" value="F:4 iron, 4 sulfur cluster binding"/>
    <property type="evidence" value="ECO:0007669"/>
    <property type="project" value="UniProtKB-KW"/>
</dbReference>
<dbReference type="GO" id="GO:0005524">
    <property type="term" value="F:ATP binding"/>
    <property type="evidence" value="ECO:0007669"/>
    <property type="project" value="UniProtKB-UniRule"/>
</dbReference>
<dbReference type="GO" id="GO:0046872">
    <property type="term" value="F:metal ion binding"/>
    <property type="evidence" value="ECO:0007669"/>
    <property type="project" value="UniProtKB-KW"/>
</dbReference>
<dbReference type="GO" id="GO:0016163">
    <property type="term" value="F:nitrogenase activity"/>
    <property type="evidence" value="ECO:0007669"/>
    <property type="project" value="UniProtKB-UniRule"/>
</dbReference>
<dbReference type="GO" id="GO:0009399">
    <property type="term" value="P:nitrogen fixation"/>
    <property type="evidence" value="ECO:0007669"/>
    <property type="project" value="UniProtKB-UniRule"/>
</dbReference>
<dbReference type="CDD" id="cd02040">
    <property type="entry name" value="NifH"/>
    <property type="match status" value="1"/>
</dbReference>
<dbReference type="Gene3D" id="3.40.50.300">
    <property type="entry name" value="P-loop containing nucleotide triphosphate hydrolases"/>
    <property type="match status" value="1"/>
</dbReference>
<dbReference type="HAMAP" id="MF_00533">
    <property type="entry name" value="NifH"/>
    <property type="match status" value="1"/>
</dbReference>
<dbReference type="InterPro" id="IPR030655">
    <property type="entry name" value="NifH/chlL_CS"/>
</dbReference>
<dbReference type="InterPro" id="IPR000392">
    <property type="entry name" value="NifH/frxC"/>
</dbReference>
<dbReference type="InterPro" id="IPR005977">
    <property type="entry name" value="Nitrogenase_Fe_NifH"/>
</dbReference>
<dbReference type="InterPro" id="IPR027417">
    <property type="entry name" value="P-loop_NTPase"/>
</dbReference>
<dbReference type="NCBIfam" id="TIGR01287">
    <property type="entry name" value="nifH"/>
    <property type="match status" value="1"/>
</dbReference>
<dbReference type="PANTHER" id="PTHR42864">
    <property type="entry name" value="LIGHT-INDEPENDENT PROTOCHLOROPHYLLIDE REDUCTASE IRON-SULFUR ATP-BINDING PROTEIN"/>
    <property type="match status" value="1"/>
</dbReference>
<dbReference type="PANTHER" id="PTHR42864:SF2">
    <property type="entry name" value="LIGHT-INDEPENDENT PROTOCHLOROPHYLLIDE REDUCTASE IRON-SULFUR ATP-BINDING PROTEIN"/>
    <property type="match status" value="1"/>
</dbReference>
<dbReference type="Pfam" id="PF00142">
    <property type="entry name" value="Fer4_NifH"/>
    <property type="match status" value="1"/>
</dbReference>
<dbReference type="PIRSF" id="PIRSF000363">
    <property type="entry name" value="Nitrogenase_iron"/>
    <property type="match status" value="1"/>
</dbReference>
<dbReference type="PRINTS" id="PR00091">
    <property type="entry name" value="NITROGNASEII"/>
</dbReference>
<dbReference type="SUPFAM" id="SSF52540">
    <property type="entry name" value="P-loop containing nucleoside triphosphate hydrolases"/>
    <property type="match status" value="1"/>
</dbReference>
<dbReference type="PROSITE" id="PS00746">
    <property type="entry name" value="NIFH_FRXC_1"/>
    <property type="match status" value="1"/>
</dbReference>
<dbReference type="PROSITE" id="PS00692">
    <property type="entry name" value="NIFH_FRXC_2"/>
    <property type="match status" value="1"/>
</dbReference>
<dbReference type="PROSITE" id="PS51026">
    <property type="entry name" value="NIFH_FRXC_3"/>
    <property type="match status" value="1"/>
</dbReference>
<sequence>MRQVAIYGKGGIGKSTTTQNTVAALAESGKKVMVVGCDPKADSTRLLLHGLNQKTVLDTLRDEGDDIELESILKTGFGETRCVESGGPEPGVGCAGRGIITSINMLEQLGAYTDDLDYVFYDVLGDVVCGGFAMPIREGKAREIYIVASGELMALYAANNIAKGIKKYAETGGVRLGGIICNSRKADNEYALVKAVAEEIGTQMIHFVPRDNIVQRAEINKMTVIDFDPAANQANEYRKLAKAIDENQMFVVPKPMTQDRLEELMMKHGFLDAV</sequence>
<feature type="chain" id="PRO_1000211894" description="Nitrogenase iron protein">
    <location>
        <begin position="1"/>
        <end position="274"/>
    </location>
</feature>
<feature type="binding site" evidence="1">
    <location>
        <begin position="8"/>
        <end position="15"/>
    </location>
    <ligand>
        <name>ATP</name>
        <dbReference type="ChEBI" id="CHEBI:30616"/>
    </ligand>
</feature>
<feature type="binding site" evidence="1">
    <location>
        <position position="94"/>
    </location>
    <ligand>
        <name>[4Fe-4S] cluster</name>
        <dbReference type="ChEBI" id="CHEBI:49883"/>
        <note>ligand shared between dimeric partners</note>
    </ligand>
</feature>
<feature type="binding site" evidence="1">
    <location>
        <position position="129"/>
    </location>
    <ligand>
        <name>[4Fe-4S] cluster</name>
        <dbReference type="ChEBI" id="CHEBI:49883"/>
        <note>ligand shared between dimeric partners</note>
    </ligand>
</feature>
<feature type="modified residue" description="ADP-ribosylarginine; by dinitrogenase reductase ADP-ribosyltransferase" evidence="1">
    <location>
        <position position="97"/>
    </location>
</feature>